<proteinExistence type="inferred from homology"/>
<keyword id="KW-0488">Methylation</keyword>
<keyword id="KW-0687">Ribonucleoprotein</keyword>
<keyword id="KW-0689">Ribosomal protein</keyword>
<keyword id="KW-0694">RNA-binding</keyword>
<keyword id="KW-0699">rRNA-binding</keyword>
<keyword id="KW-0820">tRNA-binding</keyword>
<sequence length="124" mass="13737">MATVNQLVRKPRARKVAKSNVPALEACPQKRGVCTRVYTTTPKKPNSALRKVCRVRLTNGFEVTSYIGGEGHNLQEHSVILIRGGRVKDLPGVRYHTVRGALDCSGVKDRKQARSKYGVKRPKA</sequence>
<organism>
    <name type="scientific">Salmonella enteritidis PT4 (strain P125109)</name>
    <dbReference type="NCBI Taxonomy" id="550537"/>
    <lineage>
        <taxon>Bacteria</taxon>
        <taxon>Pseudomonadati</taxon>
        <taxon>Pseudomonadota</taxon>
        <taxon>Gammaproteobacteria</taxon>
        <taxon>Enterobacterales</taxon>
        <taxon>Enterobacteriaceae</taxon>
        <taxon>Salmonella</taxon>
    </lineage>
</organism>
<evidence type="ECO:0000250" key="1"/>
<evidence type="ECO:0000255" key="2">
    <source>
        <dbReference type="HAMAP-Rule" id="MF_00403"/>
    </source>
</evidence>
<evidence type="ECO:0000305" key="3"/>
<protein>
    <recommendedName>
        <fullName evidence="2">Small ribosomal subunit protein uS12</fullName>
    </recommendedName>
    <alternativeName>
        <fullName evidence="3">30S ribosomal protein S12</fullName>
    </alternativeName>
</protein>
<comment type="function">
    <text evidence="2">With S4 and S5 plays an important role in translational accuracy.</text>
</comment>
<comment type="function">
    <text evidence="2">Interacts with and stabilizes bases of the 16S rRNA that are involved in tRNA selection in the A site and with the mRNA backbone. Located at the interface of the 30S and 50S subunits, it traverses the body of the 30S subunit contacting proteins on the other side and probably holding the rRNA structure together. The combined cluster of proteins S8, S12 and S17 appears to hold together the shoulder and platform of the 30S subunit.</text>
</comment>
<comment type="subunit">
    <text evidence="2">Part of the 30S ribosomal subunit. Contacts proteins S8 and S17. May interact with IF1 in the 30S initiation complex.</text>
</comment>
<comment type="similarity">
    <text evidence="2">Belongs to the universal ribosomal protein uS12 family.</text>
</comment>
<reference key="1">
    <citation type="journal article" date="2008" name="Genome Res.">
        <title>Comparative genome analysis of Salmonella enteritidis PT4 and Salmonella gallinarum 287/91 provides insights into evolutionary and host adaptation pathways.</title>
        <authorList>
            <person name="Thomson N.R."/>
            <person name="Clayton D.J."/>
            <person name="Windhorst D."/>
            <person name="Vernikos G."/>
            <person name="Davidson S."/>
            <person name="Churcher C."/>
            <person name="Quail M.A."/>
            <person name="Stevens M."/>
            <person name="Jones M.A."/>
            <person name="Watson M."/>
            <person name="Barron A."/>
            <person name="Layton A."/>
            <person name="Pickard D."/>
            <person name="Kingsley R.A."/>
            <person name="Bignell A."/>
            <person name="Clark L."/>
            <person name="Harris B."/>
            <person name="Ormond D."/>
            <person name="Abdellah Z."/>
            <person name="Brooks K."/>
            <person name="Cherevach I."/>
            <person name="Chillingworth T."/>
            <person name="Woodward J."/>
            <person name="Norberczak H."/>
            <person name="Lord A."/>
            <person name="Arrowsmith C."/>
            <person name="Jagels K."/>
            <person name="Moule S."/>
            <person name="Mungall K."/>
            <person name="Saunders M."/>
            <person name="Whitehead S."/>
            <person name="Chabalgoity J.A."/>
            <person name="Maskell D."/>
            <person name="Humphreys T."/>
            <person name="Roberts M."/>
            <person name="Barrow P.A."/>
            <person name="Dougan G."/>
            <person name="Parkhill J."/>
        </authorList>
    </citation>
    <scope>NUCLEOTIDE SEQUENCE [LARGE SCALE GENOMIC DNA]</scope>
    <source>
        <strain>P125109</strain>
    </source>
</reference>
<gene>
    <name evidence="2" type="primary">rpsL</name>
    <name type="ordered locus">SEN3276</name>
</gene>
<accession>B5R299</accession>
<name>RS12_SALEP</name>
<feature type="chain" id="PRO_1000123511" description="Small ribosomal subunit protein uS12">
    <location>
        <begin position="1"/>
        <end position="124"/>
    </location>
</feature>
<feature type="modified residue" description="3-methylthioaspartic acid" evidence="1">
    <location>
        <position position="89"/>
    </location>
</feature>
<dbReference type="EMBL" id="AM933172">
    <property type="protein sequence ID" value="CAR34851.1"/>
    <property type="molecule type" value="Genomic_DNA"/>
</dbReference>
<dbReference type="RefSeq" id="WP_000246815.1">
    <property type="nucleotide sequence ID" value="NC_011294.1"/>
</dbReference>
<dbReference type="SMR" id="B5R299"/>
<dbReference type="GeneID" id="98390450"/>
<dbReference type="KEGG" id="set:SEN3276"/>
<dbReference type="HOGENOM" id="CLU_104295_1_2_6"/>
<dbReference type="Proteomes" id="UP000000613">
    <property type="component" value="Chromosome"/>
</dbReference>
<dbReference type="GO" id="GO:0015935">
    <property type="term" value="C:small ribosomal subunit"/>
    <property type="evidence" value="ECO:0007669"/>
    <property type="project" value="InterPro"/>
</dbReference>
<dbReference type="GO" id="GO:0019843">
    <property type="term" value="F:rRNA binding"/>
    <property type="evidence" value="ECO:0007669"/>
    <property type="project" value="UniProtKB-UniRule"/>
</dbReference>
<dbReference type="GO" id="GO:0003735">
    <property type="term" value="F:structural constituent of ribosome"/>
    <property type="evidence" value="ECO:0007669"/>
    <property type="project" value="InterPro"/>
</dbReference>
<dbReference type="GO" id="GO:0000049">
    <property type="term" value="F:tRNA binding"/>
    <property type="evidence" value="ECO:0007669"/>
    <property type="project" value="UniProtKB-UniRule"/>
</dbReference>
<dbReference type="GO" id="GO:0006412">
    <property type="term" value="P:translation"/>
    <property type="evidence" value="ECO:0007669"/>
    <property type="project" value="UniProtKB-UniRule"/>
</dbReference>
<dbReference type="CDD" id="cd03368">
    <property type="entry name" value="Ribosomal_S12"/>
    <property type="match status" value="1"/>
</dbReference>
<dbReference type="FunFam" id="2.40.50.140:FF:000001">
    <property type="entry name" value="30S ribosomal protein S12"/>
    <property type="match status" value="1"/>
</dbReference>
<dbReference type="Gene3D" id="2.40.50.140">
    <property type="entry name" value="Nucleic acid-binding proteins"/>
    <property type="match status" value="1"/>
</dbReference>
<dbReference type="HAMAP" id="MF_00403_B">
    <property type="entry name" value="Ribosomal_uS12_B"/>
    <property type="match status" value="1"/>
</dbReference>
<dbReference type="InterPro" id="IPR012340">
    <property type="entry name" value="NA-bd_OB-fold"/>
</dbReference>
<dbReference type="InterPro" id="IPR006032">
    <property type="entry name" value="Ribosomal_uS12"/>
</dbReference>
<dbReference type="InterPro" id="IPR005679">
    <property type="entry name" value="Ribosomal_uS12_bac"/>
</dbReference>
<dbReference type="NCBIfam" id="TIGR00981">
    <property type="entry name" value="rpsL_bact"/>
    <property type="match status" value="1"/>
</dbReference>
<dbReference type="PANTHER" id="PTHR11652">
    <property type="entry name" value="30S RIBOSOMAL PROTEIN S12 FAMILY MEMBER"/>
    <property type="match status" value="1"/>
</dbReference>
<dbReference type="Pfam" id="PF00164">
    <property type="entry name" value="Ribosom_S12_S23"/>
    <property type="match status" value="1"/>
</dbReference>
<dbReference type="PIRSF" id="PIRSF002133">
    <property type="entry name" value="Ribosomal_S12/S23"/>
    <property type="match status" value="1"/>
</dbReference>
<dbReference type="PRINTS" id="PR01034">
    <property type="entry name" value="RIBOSOMALS12"/>
</dbReference>
<dbReference type="SUPFAM" id="SSF50249">
    <property type="entry name" value="Nucleic acid-binding proteins"/>
    <property type="match status" value="1"/>
</dbReference>
<dbReference type="PROSITE" id="PS00055">
    <property type="entry name" value="RIBOSOMAL_S12"/>
    <property type="match status" value="1"/>
</dbReference>